<accession>C1AFL5</accession>
<sequence>MTTVGFDVAARLGTLLTAMVTPFSGDGSLDTATAARLANHLVDQGCDGLVVSGTTGESPTTTDGEKIELLRAVLEAVGDRARVIAGAGTYDTAHSIRLAKACAAEGAHGLLVVTPYYSKPPQRGLQAHFTAVADATELPMLLYDIPGRSAVPIEPDTIRALASHPNIVGVKDAKADLHSGAQIMADTGLAYYSGDDALNLPWLAMGATGFISVIAHLAAGQLRELLSAFGSGDIATARKINIAVAPLCNAMSRLGGVTLSKAGLRLQGIDVGDPRLPQVAATPEQIDALAADMRAASVLR</sequence>
<organism>
    <name type="scientific">Mycobacterium bovis (strain BCG / Tokyo 172 / ATCC 35737 / TMC 1019)</name>
    <dbReference type="NCBI Taxonomy" id="561275"/>
    <lineage>
        <taxon>Bacteria</taxon>
        <taxon>Bacillati</taxon>
        <taxon>Actinomycetota</taxon>
        <taxon>Actinomycetes</taxon>
        <taxon>Mycobacteriales</taxon>
        <taxon>Mycobacteriaceae</taxon>
        <taxon>Mycobacterium</taxon>
        <taxon>Mycobacterium tuberculosis complex</taxon>
    </lineage>
</organism>
<reference key="1">
    <citation type="journal article" date="2009" name="Vaccine">
        <title>Whole genome sequence analysis of Mycobacterium bovis bacillus Calmette-Guerin (BCG) Tokyo 172: a comparative study of BCG vaccine substrains.</title>
        <authorList>
            <person name="Seki M."/>
            <person name="Honda I."/>
            <person name="Fujita I."/>
            <person name="Yano I."/>
            <person name="Yamamoto S."/>
            <person name="Koyama A."/>
        </authorList>
    </citation>
    <scope>NUCLEOTIDE SEQUENCE [LARGE SCALE GENOMIC DNA]</scope>
    <source>
        <strain>BCG / Tokyo 172 / ATCC 35737 / TMC 1019</strain>
    </source>
</reference>
<comment type="function">
    <text evidence="1">Catalyzes the condensation of (S)-aspartate-beta-semialdehyde [(S)-ASA] and pyruvate to 4-hydroxy-tetrahydrodipicolinate (HTPA).</text>
</comment>
<comment type="catalytic activity">
    <reaction evidence="1">
        <text>L-aspartate 4-semialdehyde + pyruvate = (2S,4S)-4-hydroxy-2,3,4,5-tetrahydrodipicolinate + H2O + H(+)</text>
        <dbReference type="Rhea" id="RHEA:34171"/>
        <dbReference type="ChEBI" id="CHEBI:15361"/>
        <dbReference type="ChEBI" id="CHEBI:15377"/>
        <dbReference type="ChEBI" id="CHEBI:15378"/>
        <dbReference type="ChEBI" id="CHEBI:67139"/>
        <dbReference type="ChEBI" id="CHEBI:537519"/>
        <dbReference type="EC" id="4.3.3.7"/>
    </reaction>
</comment>
<comment type="pathway">
    <text evidence="1">Amino-acid biosynthesis; L-lysine biosynthesis via DAP pathway; (S)-tetrahydrodipicolinate from L-aspartate: step 3/4.</text>
</comment>
<comment type="subunit">
    <text evidence="1">Homotetramer; dimer of dimers.</text>
</comment>
<comment type="subcellular location">
    <subcellularLocation>
        <location evidence="1">Cytoplasm</location>
    </subcellularLocation>
</comment>
<comment type="similarity">
    <text evidence="1">Belongs to the DapA family.</text>
</comment>
<comment type="caution">
    <text evidence="2">Was originally thought to be a dihydrodipicolinate synthase (DHDPS), catalyzing the condensation of (S)-aspartate-beta-semialdehyde [(S)-ASA] and pyruvate to dihydrodipicolinate (DHDP). However, it was shown in E.coli that the product of the enzymatic reaction is not dihydrodipicolinate but in fact (4S)-4-hydroxy-2,3,4,5-tetrahydro-(2S)-dipicolinic acid (HTPA), and that the consecutive dehydration reaction leading to DHDP is not spontaneous but catalyzed by DapB.</text>
</comment>
<gene>
    <name evidence="1" type="primary">dapA</name>
    <name type="ordered locus">JTY_2763</name>
</gene>
<dbReference type="EC" id="4.3.3.7" evidence="1"/>
<dbReference type="EMBL" id="AP010918">
    <property type="protein sequence ID" value="BAH27044.1"/>
    <property type="molecule type" value="Genomic_DNA"/>
</dbReference>
<dbReference type="RefSeq" id="WP_003900564.1">
    <property type="nucleotide sequence ID" value="NZ_CP014566.1"/>
</dbReference>
<dbReference type="SMR" id="C1AFL5"/>
<dbReference type="GeneID" id="45426740"/>
<dbReference type="KEGG" id="mbt:JTY_2763"/>
<dbReference type="HOGENOM" id="CLU_049343_7_1_11"/>
<dbReference type="UniPathway" id="UPA00034">
    <property type="reaction ID" value="UER00017"/>
</dbReference>
<dbReference type="GO" id="GO:0005829">
    <property type="term" value="C:cytosol"/>
    <property type="evidence" value="ECO:0007669"/>
    <property type="project" value="TreeGrafter"/>
</dbReference>
<dbReference type="GO" id="GO:0008840">
    <property type="term" value="F:4-hydroxy-tetrahydrodipicolinate synthase activity"/>
    <property type="evidence" value="ECO:0007669"/>
    <property type="project" value="UniProtKB-UniRule"/>
</dbReference>
<dbReference type="GO" id="GO:0019877">
    <property type="term" value="P:diaminopimelate biosynthetic process"/>
    <property type="evidence" value="ECO:0007669"/>
    <property type="project" value="UniProtKB-UniRule"/>
</dbReference>
<dbReference type="GO" id="GO:0009089">
    <property type="term" value="P:lysine biosynthetic process via diaminopimelate"/>
    <property type="evidence" value="ECO:0007669"/>
    <property type="project" value="UniProtKB-UniRule"/>
</dbReference>
<dbReference type="CDD" id="cd00950">
    <property type="entry name" value="DHDPS"/>
    <property type="match status" value="1"/>
</dbReference>
<dbReference type="FunFam" id="3.20.20.70:FF:000273">
    <property type="entry name" value="4-hydroxy-tetrahydrodipicolinate synthase"/>
    <property type="match status" value="1"/>
</dbReference>
<dbReference type="Gene3D" id="3.20.20.70">
    <property type="entry name" value="Aldolase class I"/>
    <property type="match status" value="1"/>
</dbReference>
<dbReference type="HAMAP" id="MF_00418">
    <property type="entry name" value="DapA"/>
    <property type="match status" value="1"/>
</dbReference>
<dbReference type="InterPro" id="IPR013785">
    <property type="entry name" value="Aldolase_TIM"/>
</dbReference>
<dbReference type="InterPro" id="IPR005263">
    <property type="entry name" value="DapA"/>
</dbReference>
<dbReference type="InterPro" id="IPR002220">
    <property type="entry name" value="DapA-like"/>
</dbReference>
<dbReference type="InterPro" id="IPR020625">
    <property type="entry name" value="Schiff_base-form_aldolases_AS"/>
</dbReference>
<dbReference type="InterPro" id="IPR020624">
    <property type="entry name" value="Schiff_base-form_aldolases_CS"/>
</dbReference>
<dbReference type="NCBIfam" id="TIGR00674">
    <property type="entry name" value="dapA"/>
    <property type="match status" value="1"/>
</dbReference>
<dbReference type="PANTHER" id="PTHR12128:SF66">
    <property type="entry name" value="4-HYDROXY-2-OXOGLUTARATE ALDOLASE, MITOCHONDRIAL"/>
    <property type="match status" value="1"/>
</dbReference>
<dbReference type="PANTHER" id="PTHR12128">
    <property type="entry name" value="DIHYDRODIPICOLINATE SYNTHASE"/>
    <property type="match status" value="1"/>
</dbReference>
<dbReference type="Pfam" id="PF00701">
    <property type="entry name" value="DHDPS"/>
    <property type="match status" value="1"/>
</dbReference>
<dbReference type="PIRSF" id="PIRSF001365">
    <property type="entry name" value="DHDPS"/>
    <property type="match status" value="1"/>
</dbReference>
<dbReference type="PRINTS" id="PR00146">
    <property type="entry name" value="DHPICSNTHASE"/>
</dbReference>
<dbReference type="SMART" id="SM01130">
    <property type="entry name" value="DHDPS"/>
    <property type="match status" value="1"/>
</dbReference>
<dbReference type="SUPFAM" id="SSF51569">
    <property type="entry name" value="Aldolase"/>
    <property type="match status" value="1"/>
</dbReference>
<dbReference type="PROSITE" id="PS00665">
    <property type="entry name" value="DHDPS_1"/>
    <property type="match status" value="1"/>
</dbReference>
<dbReference type="PROSITE" id="PS00666">
    <property type="entry name" value="DHDPS_2"/>
    <property type="match status" value="1"/>
</dbReference>
<protein>
    <recommendedName>
        <fullName evidence="1">4-hydroxy-tetrahydrodipicolinate synthase</fullName>
        <shortName evidence="1">HTPA synthase</shortName>
        <ecNumber evidence="1">4.3.3.7</ecNumber>
    </recommendedName>
</protein>
<name>DAPA_MYCBT</name>
<evidence type="ECO:0000255" key="1">
    <source>
        <dbReference type="HAMAP-Rule" id="MF_00418"/>
    </source>
</evidence>
<evidence type="ECO:0000305" key="2"/>
<keyword id="KW-0028">Amino-acid biosynthesis</keyword>
<keyword id="KW-0963">Cytoplasm</keyword>
<keyword id="KW-0220">Diaminopimelate biosynthesis</keyword>
<keyword id="KW-0456">Lyase</keyword>
<keyword id="KW-0457">Lysine biosynthesis</keyword>
<keyword id="KW-0704">Schiff base</keyword>
<proteinExistence type="inferred from homology"/>
<feature type="chain" id="PRO_1000134873" description="4-hydroxy-tetrahydrodipicolinate synthase">
    <location>
        <begin position="1"/>
        <end position="300"/>
    </location>
</feature>
<feature type="active site" description="Proton donor/acceptor" evidence="1">
    <location>
        <position position="143"/>
    </location>
</feature>
<feature type="active site" description="Schiff-base intermediate with substrate" evidence="1">
    <location>
        <position position="171"/>
    </location>
</feature>
<feature type="binding site" evidence="1">
    <location>
        <position position="55"/>
    </location>
    <ligand>
        <name>pyruvate</name>
        <dbReference type="ChEBI" id="CHEBI:15361"/>
    </ligand>
</feature>
<feature type="binding site" evidence="1">
    <location>
        <position position="211"/>
    </location>
    <ligand>
        <name>pyruvate</name>
        <dbReference type="ChEBI" id="CHEBI:15361"/>
    </ligand>
</feature>
<feature type="site" description="Part of a proton relay during catalysis" evidence="1">
    <location>
        <position position="54"/>
    </location>
</feature>
<feature type="site" description="Part of a proton relay during catalysis" evidence="1">
    <location>
        <position position="117"/>
    </location>
</feature>